<organism>
    <name type="scientific">Bos taurus</name>
    <name type="common">Bovine</name>
    <dbReference type="NCBI Taxonomy" id="9913"/>
    <lineage>
        <taxon>Eukaryota</taxon>
        <taxon>Metazoa</taxon>
        <taxon>Chordata</taxon>
        <taxon>Craniata</taxon>
        <taxon>Vertebrata</taxon>
        <taxon>Euteleostomi</taxon>
        <taxon>Mammalia</taxon>
        <taxon>Eutheria</taxon>
        <taxon>Laurasiatheria</taxon>
        <taxon>Artiodactyla</taxon>
        <taxon>Ruminantia</taxon>
        <taxon>Pecora</taxon>
        <taxon>Bovidae</taxon>
        <taxon>Bovinae</taxon>
        <taxon>Bos</taxon>
    </lineage>
</organism>
<reference key="1">
    <citation type="journal article" date="1990" name="Nucleic Acids Res.">
        <title>Nucleotide sequence of bovine copper/zinc superoxide dismutase cDNA generated by the polymerase chain reaction.</title>
        <authorList>
            <person name="Gibbs L.S."/>
            <person name="Shaffer J.B."/>
        </authorList>
    </citation>
    <scope>NUCLEOTIDE SEQUENCE [MRNA]</scope>
</reference>
<reference key="2">
    <citation type="journal article" date="1991" name="Biochem. Biophys. Res. Commun.">
        <title>Thermostabilization of recombinant human and bovine CuZn superoxide dismutases by replacement of free cysteines.</title>
        <authorList>
            <person name="Hallewell R.A."/>
            <person name="Imlay K.C."/>
            <person name="Lee P."/>
            <person name="Fong N.M."/>
            <person name="Gallegos C."/>
            <person name="Getzoff E.D."/>
            <person name="Tainer J.A."/>
            <person name="Cabelli D.E."/>
            <person name="Tekamp-Olson P."/>
            <person name="Mullenbach G.T."/>
            <person name="Cousens L.S."/>
        </authorList>
    </citation>
    <scope>NUCLEOTIDE SEQUENCE [MRNA]</scope>
</reference>
<reference key="3">
    <citation type="submission" date="2005-08" db="EMBL/GenBank/DDBJ databases">
        <authorList>
            <consortium name="NIH - Mammalian Gene Collection (MGC) project"/>
        </authorList>
    </citation>
    <scope>NUCLEOTIDE SEQUENCE [LARGE SCALE MRNA]</scope>
    <source>
        <strain>Crossbred X Angus</strain>
        <tissue>Ileum</tissue>
    </source>
</reference>
<reference key="4">
    <citation type="journal article" date="1974" name="J. Biol. Chem.">
        <title>Bovine erythrocyte superoxide dismutase. Complete amino acid sequence.</title>
        <authorList>
            <person name="Steinman H.M."/>
            <person name="Naik V.R."/>
            <person name="Abernethy J.L."/>
            <person name="Hill R.L."/>
        </authorList>
    </citation>
    <scope>PROTEIN SEQUENCE OF 2-152</scope>
    <scope>ACETYLATION AT ALA-2</scope>
</reference>
<reference key="5">
    <citation type="journal article" date="1974" name="J. Biol. Chem.">
        <title>Bovine erythrocyte superoxide dismutase. Subunit structure and sequence location of the intrasubunit disulfide bond.</title>
        <authorList>
            <person name="Abernethy J.L."/>
            <person name="Steinman H.M."/>
            <person name="Hill R.L."/>
        </authorList>
    </citation>
    <scope>DISULFIDE BOND</scope>
</reference>
<reference key="6">
    <citation type="journal article" date="1979" name="Biochemistry">
        <title>Chemical modification of arginine at the active site of the bovine erythrocyte superoxide dismutase.</title>
        <authorList>
            <person name="Malinowski D.P."/>
            <person name="Friedovich I."/>
        </authorList>
    </citation>
    <scope>FUNCTION</scope>
    <scope>CATALYTIC ACTIVITY</scope>
    <scope>INHIBITION BY CHEMICAL MODIFICATION</scope>
</reference>
<reference key="7">
    <citation type="journal article" date="1975" name="Proc. Natl. Acad. Sci. U.S.A.">
        <title>Crystal structure of bovine Cu,Zn superoxide dismutase at 3-A resolution: chain tracing and metal ligands.</title>
        <authorList>
            <person name="Richardson J.S."/>
            <person name="Thomas K.A."/>
            <person name="Rubin B.H."/>
            <person name="Richardson D.C."/>
        </authorList>
    </citation>
    <scope>X-RAY CRYSTALLOGRAPHY (3.0 ANGSTROMS)</scope>
</reference>
<reference key="8">
    <citation type="journal article" date="1982" name="J. Mol. Biol.">
        <title>Determination and analysis of the 2 A-structure of copper, zinc superoxide dismutase.</title>
        <authorList>
            <person name="Tainer J.A."/>
            <person name="Getzoff E.D."/>
            <person name="Beem K.M."/>
            <person name="Richardson J.S."/>
            <person name="Richardson D.C."/>
        </authorList>
    </citation>
    <scope>X-RAY CRYSTALLOGRAPHY (2.0 ANGSTROMS)</scope>
</reference>
<reference key="9">
    <citation type="journal article" date="1983" name="Nature">
        <title>Structure and mechanism of copper, zinc superoxide dismutase.</title>
        <authorList>
            <person name="Tainer J.A."/>
            <person name="Getzoff E.D."/>
            <person name="Richardson J.S."/>
            <person name="Richardson D.C."/>
        </authorList>
    </citation>
    <scope>STRUCTURE</scope>
    <scope>MECHANISM</scope>
</reference>
<reference key="10">
    <citation type="journal article" date="1992" name="J. Mol. Biol.">
        <title>Crystal structure solution and refinement of the semisynthetic cobalt-substituted bovine erythrocyte superoxide dismutase at 2.0-A resolution.</title>
        <authorList>
            <person name="Djinovic K."/>
            <person name="Coda A."/>
            <person name="Antolini L."/>
            <person name="Pelosi G."/>
            <person name="Desideri A."/>
            <person name="Falconi M."/>
            <person name="Rotilio G."/>
            <person name="Bolognesi M."/>
        </authorList>
    </citation>
    <scope>X-RAY CRYSTALLOGRAPHY (2.0 ANGSTROMS)</scope>
</reference>
<reference key="11">
    <citation type="journal article" date="1995" name="J. Mol. Biol.">
        <title>Crystal structure of reduced bovine erythrocyte superoxide dismutase at 1.9-A resolution.</title>
        <authorList>
            <person name="Rypniewski W.R."/>
            <person name="Mangani S."/>
            <person name="Bruni B."/>
            <person name="Orioli P.L."/>
            <person name="Casati M."/>
            <person name="Wilson K.S."/>
        </authorList>
    </citation>
    <scope>X-RAY CRYSTALLOGRAPHY (1.9 ANGSTROMS)</scope>
</reference>
<reference key="12">
    <citation type="journal article" date="1999" name="J. Mol. Biol.">
        <title>Crystallographic structures of bovine copper-zinc superoxide dismutase reveal asymmetry in two subunits: functionally important three and five coordinate copper sites captured in the same crystal.</title>
        <authorList>
            <person name="Hough M.A."/>
            <person name="Hasnain S.S."/>
        </authorList>
    </citation>
    <scope>X-RAY CRYSTALLOGRAPHY (2.3 ANGSTROMS)</scope>
</reference>
<reference key="13">
    <citation type="journal article" date="2003" name="Structure">
        <title>Structure of fully reduced bovine copper zinc superoxide dismutase at 1.15 A.</title>
        <authorList>
            <person name="Hough M.A."/>
            <person name="Hasnain S.S."/>
        </authorList>
    </citation>
    <scope>X-RAY CRYSTALLOGRAPHY (1.15 ANGSTROMS) IN COMPLEX WITH COPPER AND ZINC IONS</scope>
    <scope>SUBUNIT</scope>
</reference>
<name>SODC_BOVIN</name>
<feature type="initiator methionine" description="Removed" evidence="7">
    <location>
        <position position="1"/>
    </location>
</feature>
<feature type="chain" id="PRO_0000164049" description="Superoxide dismutase [Cu-Zn]">
    <location>
        <begin position="2"/>
        <end position="152"/>
    </location>
</feature>
<feature type="binding site" evidence="5 6">
    <location>
        <position position="45"/>
    </location>
    <ligand>
        <name>Cu cation</name>
        <dbReference type="ChEBI" id="CHEBI:23378"/>
        <note>catalytic</note>
    </ligand>
</feature>
<feature type="binding site" evidence="5 6">
    <location>
        <position position="47"/>
    </location>
    <ligand>
        <name>Cu cation</name>
        <dbReference type="ChEBI" id="CHEBI:23378"/>
        <note>catalytic</note>
    </ligand>
</feature>
<feature type="binding site" evidence="5 6">
    <location>
        <position position="62"/>
    </location>
    <ligand>
        <name>Cu cation</name>
        <dbReference type="ChEBI" id="CHEBI:23378"/>
        <note>catalytic</note>
    </ligand>
</feature>
<feature type="binding site" evidence="5">
    <location>
        <position position="62"/>
    </location>
    <ligand>
        <name>Zn(2+)</name>
        <dbReference type="ChEBI" id="CHEBI:29105"/>
        <note>structural</note>
    </ligand>
</feature>
<feature type="binding site" evidence="5">
    <location>
        <position position="70"/>
    </location>
    <ligand>
        <name>Zn(2+)</name>
        <dbReference type="ChEBI" id="CHEBI:29105"/>
        <note>structural</note>
    </ligand>
</feature>
<feature type="binding site" evidence="5">
    <location>
        <position position="79"/>
    </location>
    <ligand>
        <name>Zn(2+)</name>
        <dbReference type="ChEBI" id="CHEBI:29105"/>
        <note>structural</note>
    </ligand>
</feature>
<feature type="binding site" evidence="5">
    <location>
        <position position="82"/>
    </location>
    <ligand>
        <name>Zn(2+)</name>
        <dbReference type="ChEBI" id="CHEBI:29105"/>
        <note>structural</note>
    </ligand>
</feature>
<feature type="binding site" evidence="5 6">
    <location>
        <position position="119"/>
    </location>
    <ligand>
        <name>Cu cation</name>
        <dbReference type="ChEBI" id="CHEBI:23378"/>
        <note>catalytic</note>
    </ligand>
</feature>
<feature type="modified residue" description="N-acetylalanine" evidence="7">
    <location>
        <position position="2"/>
    </location>
</feature>
<feature type="modified residue" description="N6-succinyllysine" evidence="4">
    <location>
        <position position="4"/>
    </location>
</feature>
<feature type="modified residue" description="N6-succinyllysine" evidence="4">
    <location>
        <position position="10"/>
    </location>
</feature>
<feature type="modified residue" description="N6-succinyllysine" evidence="4">
    <location>
        <position position="90"/>
    </location>
</feature>
<feature type="modified residue" description="Phosphoserine" evidence="3">
    <location>
        <position position="104"/>
    </location>
</feature>
<feature type="modified residue" description="Phosphoserine" evidence="4">
    <location>
        <position position="106"/>
    </location>
</feature>
<feature type="modified residue" description="N6-acetyllysine; alternate" evidence="2">
    <location>
        <position position="121"/>
    </location>
</feature>
<feature type="modified residue" description="N6-succinyllysine; alternate" evidence="2">
    <location>
        <position position="121"/>
    </location>
</feature>
<feature type="modified residue" description="N6-acetyllysine; alternate" evidence="4">
    <location>
        <position position="135"/>
    </location>
</feature>
<feature type="modified residue" description="N6-succinyllysine; alternate" evidence="4">
    <location>
        <position position="135"/>
    </location>
</feature>
<feature type="lipid moiety-binding region" description="S-palmitoyl cysteine" evidence="1">
    <location>
        <position position="7"/>
    </location>
</feature>
<feature type="disulfide bond" evidence="8">
    <location>
        <begin position="56"/>
        <end position="145"/>
    </location>
</feature>
<feature type="strand" evidence="11">
    <location>
        <begin position="4"/>
        <end position="10"/>
    </location>
</feature>
<feature type="strand" evidence="11">
    <location>
        <begin position="12"/>
        <end position="14"/>
    </location>
</feature>
<feature type="strand" evidence="11">
    <location>
        <begin position="16"/>
        <end position="24"/>
    </location>
</feature>
<feature type="strand" evidence="11">
    <location>
        <begin position="27"/>
        <end position="36"/>
    </location>
</feature>
<feature type="strand" evidence="11">
    <location>
        <begin position="39"/>
        <end position="48"/>
    </location>
</feature>
<feature type="turn" evidence="11">
    <location>
        <begin position="53"/>
        <end position="56"/>
    </location>
</feature>
<feature type="helix" evidence="11">
    <location>
        <begin position="57"/>
        <end position="59"/>
    </location>
</feature>
<feature type="strand" evidence="14">
    <location>
        <begin position="76"/>
        <end position="78"/>
    </location>
</feature>
<feature type="strand" evidence="11">
    <location>
        <begin position="82"/>
        <end position="88"/>
    </location>
</feature>
<feature type="turn" evidence="13">
    <location>
        <begin position="90"/>
        <end position="92"/>
    </location>
</feature>
<feature type="strand" evidence="11">
    <location>
        <begin position="94"/>
        <end position="102"/>
    </location>
</feature>
<feature type="strand" evidence="11">
    <location>
        <begin position="104"/>
        <end position="107"/>
    </location>
</feature>
<feature type="strand" evidence="11">
    <location>
        <begin position="114"/>
        <end position="121"/>
    </location>
</feature>
<feature type="strand" evidence="11">
    <location>
        <begin position="128"/>
        <end position="130"/>
    </location>
</feature>
<feature type="helix" evidence="11">
    <location>
        <begin position="133"/>
        <end position="136"/>
    </location>
</feature>
<feature type="strand" evidence="11">
    <location>
        <begin position="141"/>
        <end position="147"/>
    </location>
</feature>
<feature type="strand" evidence="12">
    <location>
        <begin position="149"/>
        <end position="152"/>
    </location>
</feature>
<gene>
    <name evidence="2" type="primary">SOD1</name>
</gene>
<evidence type="ECO:0000250" key="1"/>
<evidence type="ECO:0000250" key="2">
    <source>
        <dbReference type="UniProtKB" id="P00441"/>
    </source>
</evidence>
<evidence type="ECO:0000250" key="3">
    <source>
        <dbReference type="UniProtKB" id="P07632"/>
    </source>
</evidence>
<evidence type="ECO:0000250" key="4">
    <source>
        <dbReference type="UniProtKB" id="P08228"/>
    </source>
</evidence>
<evidence type="ECO:0000269" key="5">
    <source>
    </source>
</evidence>
<evidence type="ECO:0000269" key="6">
    <source>
    </source>
</evidence>
<evidence type="ECO:0000269" key="7">
    <source>
    </source>
</evidence>
<evidence type="ECO:0000269" key="8">
    <source>
    </source>
</evidence>
<evidence type="ECO:0000269" key="9">
    <source>
    </source>
</evidence>
<evidence type="ECO:0000305" key="10"/>
<evidence type="ECO:0007829" key="11">
    <source>
        <dbReference type="PDB" id="1Q0E"/>
    </source>
</evidence>
<evidence type="ECO:0007829" key="12">
    <source>
        <dbReference type="PDB" id="1SDA"/>
    </source>
</evidence>
<evidence type="ECO:0007829" key="13">
    <source>
        <dbReference type="PDB" id="2SOD"/>
    </source>
</evidence>
<evidence type="ECO:0007829" key="14">
    <source>
        <dbReference type="PDB" id="2Z7Y"/>
    </source>
</evidence>
<sequence>MATKAVCVLKGDGPVQGTIHFEAKGDTVVVTGSITGLTEGDHGFHVHQFGDNTQGCTSAGPHFNPLSKKHGGPKDEERHVGDLGNVTADKNGVAIVDIVDPLISLSGEYSIIGRTMVVHEKPDDLGRGGNEESTKTGNAGSRLACGVIGIAK</sequence>
<keyword id="KW-0002">3D-structure</keyword>
<keyword id="KW-0007">Acetylation</keyword>
<keyword id="KW-0049">Antioxidant</keyword>
<keyword id="KW-0186">Copper</keyword>
<keyword id="KW-0963">Cytoplasm</keyword>
<keyword id="KW-0903">Direct protein sequencing</keyword>
<keyword id="KW-1015">Disulfide bond</keyword>
<keyword id="KW-0449">Lipoprotein</keyword>
<keyword id="KW-0479">Metal-binding</keyword>
<keyword id="KW-0539">Nucleus</keyword>
<keyword id="KW-0560">Oxidoreductase</keyword>
<keyword id="KW-0564">Palmitate</keyword>
<keyword id="KW-0597">Phosphoprotein</keyword>
<keyword id="KW-1185">Reference proteome</keyword>
<keyword id="KW-0862">Zinc</keyword>
<protein>
    <recommendedName>
        <fullName evidence="2">Superoxide dismutase [Cu-Zn]</fullName>
        <ecNumber evidence="9">1.15.1.1</ecNumber>
    </recommendedName>
</protein>
<dbReference type="EC" id="1.15.1.1" evidence="9"/>
<dbReference type="EMBL" id="X54799">
    <property type="status" value="NOT_ANNOTATED_CDS"/>
    <property type="molecule type" value="mRNA"/>
</dbReference>
<dbReference type="EMBL" id="M81129">
    <property type="protein sequence ID" value="AAA73164.1"/>
    <property type="molecule type" value="mRNA"/>
</dbReference>
<dbReference type="EMBL" id="BC102432">
    <property type="protein sequence ID" value="AAI02433.1"/>
    <property type="molecule type" value="mRNA"/>
</dbReference>
<dbReference type="PIR" id="I45883">
    <property type="entry name" value="DSBOCZ"/>
</dbReference>
<dbReference type="RefSeq" id="NP_777040.1">
    <property type="nucleotide sequence ID" value="NM_174615.2"/>
</dbReference>
<dbReference type="PDB" id="1CB4">
    <property type="method" value="X-ray"/>
    <property type="resolution" value="2.30 A"/>
    <property type="chains" value="A/B=2-152"/>
</dbReference>
<dbReference type="PDB" id="1CBJ">
    <property type="method" value="X-ray"/>
    <property type="resolution" value="1.65 A"/>
    <property type="chains" value="A/B=2-152"/>
</dbReference>
<dbReference type="PDB" id="1COB">
    <property type="method" value="X-ray"/>
    <property type="resolution" value="2.00 A"/>
    <property type="chains" value="A/B=2-152"/>
</dbReference>
<dbReference type="PDB" id="1E9O">
    <property type="method" value="X-ray"/>
    <property type="resolution" value="1.85 A"/>
    <property type="chains" value="A/B=2-152"/>
</dbReference>
<dbReference type="PDB" id="1E9P">
    <property type="method" value="X-ray"/>
    <property type="resolution" value="1.70 A"/>
    <property type="chains" value="A/B=2-151"/>
</dbReference>
<dbReference type="PDB" id="1E9Q">
    <property type="method" value="X-ray"/>
    <property type="resolution" value="1.75 A"/>
    <property type="chains" value="A/B=2-152"/>
</dbReference>
<dbReference type="PDB" id="1Q0E">
    <property type="method" value="X-ray"/>
    <property type="resolution" value="1.15 A"/>
    <property type="chains" value="A/B=2-152"/>
</dbReference>
<dbReference type="PDB" id="1SDA">
    <property type="method" value="X-ray"/>
    <property type="resolution" value="2.50 A"/>
    <property type="chains" value="B/G/O/Y=2-152"/>
</dbReference>
<dbReference type="PDB" id="1SXA">
    <property type="method" value="X-ray"/>
    <property type="resolution" value="1.90 A"/>
    <property type="chains" value="A/B=2-152"/>
</dbReference>
<dbReference type="PDB" id="1SXB">
    <property type="method" value="X-ray"/>
    <property type="resolution" value="2.00 A"/>
    <property type="chains" value="A/B=2-152"/>
</dbReference>
<dbReference type="PDB" id="1SXC">
    <property type="method" value="X-ray"/>
    <property type="resolution" value="1.90 A"/>
    <property type="chains" value="A/B=2-152"/>
</dbReference>
<dbReference type="PDB" id="1SXN">
    <property type="method" value="X-ray"/>
    <property type="resolution" value="1.90 A"/>
    <property type="chains" value="A/B=2-152"/>
</dbReference>
<dbReference type="PDB" id="1SXS">
    <property type="method" value="X-ray"/>
    <property type="resolution" value="2.00 A"/>
    <property type="chains" value="A/B=2-152"/>
</dbReference>
<dbReference type="PDB" id="1SXZ">
    <property type="method" value="X-ray"/>
    <property type="resolution" value="2.05 A"/>
    <property type="chains" value="A/B=2-152"/>
</dbReference>
<dbReference type="PDB" id="2AEO">
    <property type="method" value="X-ray"/>
    <property type="resolution" value="1.80 A"/>
    <property type="chains" value="A/B=2-152"/>
</dbReference>
<dbReference type="PDB" id="2SOD">
    <property type="method" value="X-ray"/>
    <property type="resolution" value="2.00 A"/>
    <property type="chains" value="B/G/O/Y=2-152"/>
</dbReference>
<dbReference type="PDB" id="2Z7U">
    <property type="method" value="X-ray"/>
    <property type="resolution" value="2.10 A"/>
    <property type="chains" value="A/B=2-152"/>
</dbReference>
<dbReference type="PDB" id="2Z7W">
    <property type="method" value="X-ray"/>
    <property type="resolution" value="1.80 A"/>
    <property type="chains" value="A/B=2-152"/>
</dbReference>
<dbReference type="PDB" id="2Z7Y">
    <property type="method" value="X-ray"/>
    <property type="resolution" value="1.55 A"/>
    <property type="chains" value="A/B=2-152"/>
</dbReference>
<dbReference type="PDB" id="2Z7Z">
    <property type="method" value="X-ray"/>
    <property type="resolution" value="1.85 A"/>
    <property type="chains" value="A/B=2-152"/>
</dbReference>
<dbReference type="PDB" id="2ZOW">
    <property type="method" value="X-ray"/>
    <property type="resolution" value="1.45 A"/>
    <property type="chains" value="A/B=2-152"/>
</dbReference>
<dbReference type="PDB" id="3HW7">
    <property type="method" value="X-ray"/>
    <property type="resolution" value="2.00 A"/>
    <property type="chains" value="A/B=2-152"/>
</dbReference>
<dbReference type="PDB" id="3SOD">
    <property type="method" value="X-ray"/>
    <property type="resolution" value="2.10 A"/>
    <property type="chains" value="B/G/O/Y=2-152"/>
</dbReference>
<dbReference type="PDB" id="8IQ0">
    <property type="method" value="X-ray"/>
    <property type="resolution" value="1.88 A"/>
    <property type="chains" value="A/B/C/D/E/F/G/H/I/J/K/L/M/N/O/P=2-152"/>
</dbReference>
<dbReference type="PDB" id="8IQ1">
    <property type="method" value="X-ray"/>
    <property type="resolution" value="1.80 A"/>
    <property type="chains" value="A/B/C/D/E/F/G/H=2-152"/>
</dbReference>
<dbReference type="PDBsum" id="1CB4"/>
<dbReference type="PDBsum" id="1CBJ"/>
<dbReference type="PDBsum" id="1COB"/>
<dbReference type="PDBsum" id="1E9O"/>
<dbReference type="PDBsum" id="1E9P"/>
<dbReference type="PDBsum" id="1E9Q"/>
<dbReference type="PDBsum" id="1Q0E"/>
<dbReference type="PDBsum" id="1SDA"/>
<dbReference type="PDBsum" id="1SXA"/>
<dbReference type="PDBsum" id="1SXB"/>
<dbReference type="PDBsum" id="1SXC"/>
<dbReference type="PDBsum" id="1SXN"/>
<dbReference type="PDBsum" id="1SXS"/>
<dbReference type="PDBsum" id="1SXZ"/>
<dbReference type="PDBsum" id="2AEO"/>
<dbReference type="PDBsum" id="2SOD"/>
<dbReference type="PDBsum" id="2Z7U"/>
<dbReference type="PDBsum" id="2Z7W"/>
<dbReference type="PDBsum" id="2Z7Y"/>
<dbReference type="PDBsum" id="2Z7Z"/>
<dbReference type="PDBsum" id="2ZOW"/>
<dbReference type="PDBsum" id="3HW7"/>
<dbReference type="PDBsum" id="3SOD"/>
<dbReference type="PDBsum" id="8IQ0"/>
<dbReference type="PDBsum" id="8IQ1"/>
<dbReference type="PCDDB" id="P00442"/>
<dbReference type="SMR" id="P00442"/>
<dbReference type="FunCoup" id="P00442">
    <property type="interactions" value="1943"/>
</dbReference>
<dbReference type="IntAct" id="P00442">
    <property type="interactions" value="2"/>
</dbReference>
<dbReference type="STRING" id="9913.ENSBTAP00000032384"/>
<dbReference type="BindingDB" id="P00442"/>
<dbReference type="iPTMnet" id="P00442"/>
<dbReference type="PaxDb" id="9913-ENSBTAP00000032384"/>
<dbReference type="PeptideAtlas" id="P00442"/>
<dbReference type="GeneID" id="281495"/>
<dbReference type="KEGG" id="bta:281495"/>
<dbReference type="CTD" id="6647"/>
<dbReference type="VEuPathDB" id="HostDB:ENSBTAG00000018854"/>
<dbReference type="eggNOG" id="KOG0441">
    <property type="taxonomic scope" value="Eukaryota"/>
</dbReference>
<dbReference type="HOGENOM" id="CLU_056632_4_1_1"/>
<dbReference type="InParanoid" id="P00442"/>
<dbReference type="OMA" id="AQRGFHI"/>
<dbReference type="OrthoDB" id="2015551at2759"/>
<dbReference type="TreeFam" id="TF105131"/>
<dbReference type="BRENDA" id="1.15.1.1">
    <property type="organism ID" value="908"/>
</dbReference>
<dbReference type="Reactome" id="R-BTA-114608">
    <property type="pathway name" value="Platelet degranulation"/>
</dbReference>
<dbReference type="Reactome" id="R-BTA-3299685">
    <property type="pathway name" value="Detoxification of Reactive Oxygen Species"/>
</dbReference>
<dbReference type="SABIO-RK" id="P00442"/>
<dbReference type="EvolutionaryTrace" id="P00442"/>
<dbReference type="Proteomes" id="UP000009136">
    <property type="component" value="Chromosome 1"/>
</dbReference>
<dbReference type="Bgee" id="ENSBTAG00000018854">
    <property type="expression patterns" value="Expressed in oocyte and 106 other cell types or tissues"/>
</dbReference>
<dbReference type="GO" id="GO:0005737">
    <property type="term" value="C:cytoplasm"/>
    <property type="evidence" value="ECO:0000250"/>
    <property type="project" value="UniProtKB"/>
</dbReference>
<dbReference type="GO" id="GO:0031410">
    <property type="term" value="C:cytoplasmic vesicle"/>
    <property type="evidence" value="ECO:0000250"/>
    <property type="project" value="UniProtKB"/>
</dbReference>
<dbReference type="GO" id="GO:0005829">
    <property type="term" value="C:cytosol"/>
    <property type="evidence" value="ECO:0000250"/>
    <property type="project" value="UniProtKB"/>
</dbReference>
<dbReference type="GO" id="GO:0032839">
    <property type="term" value="C:dendrite cytoplasm"/>
    <property type="evidence" value="ECO:0000314"/>
    <property type="project" value="UniProtKB"/>
</dbReference>
<dbReference type="GO" id="GO:0005739">
    <property type="term" value="C:mitochondrion"/>
    <property type="evidence" value="ECO:0000250"/>
    <property type="project" value="UniProtKB"/>
</dbReference>
<dbReference type="GO" id="GO:0043025">
    <property type="term" value="C:neuronal cell body"/>
    <property type="evidence" value="ECO:0000314"/>
    <property type="project" value="UniProtKB"/>
</dbReference>
<dbReference type="GO" id="GO:0005634">
    <property type="term" value="C:nucleus"/>
    <property type="evidence" value="ECO:0000250"/>
    <property type="project" value="UniProtKB"/>
</dbReference>
<dbReference type="GO" id="GO:0005777">
    <property type="term" value="C:peroxisome"/>
    <property type="evidence" value="ECO:0000318"/>
    <property type="project" value="GO_Central"/>
</dbReference>
<dbReference type="GO" id="GO:0032991">
    <property type="term" value="C:protein-containing complex"/>
    <property type="evidence" value="ECO:0000314"/>
    <property type="project" value="UniProtKB"/>
</dbReference>
<dbReference type="GO" id="GO:0005507">
    <property type="term" value="F:copper ion binding"/>
    <property type="evidence" value="ECO:0000314"/>
    <property type="project" value="UniProtKB"/>
</dbReference>
<dbReference type="GO" id="GO:0042803">
    <property type="term" value="F:protein homodimerization activity"/>
    <property type="evidence" value="ECO:0000314"/>
    <property type="project" value="UniProtKB"/>
</dbReference>
<dbReference type="GO" id="GO:0030346">
    <property type="term" value="F:protein phosphatase 2B binding"/>
    <property type="evidence" value="ECO:0000250"/>
    <property type="project" value="UniProtKB"/>
</dbReference>
<dbReference type="GO" id="GO:0051087">
    <property type="term" value="F:protein-folding chaperone binding"/>
    <property type="evidence" value="ECO:0000250"/>
    <property type="project" value="UniProtKB"/>
</dbReference>
<dbReference type="GO" id="GO:0004784">
    <property type="term" value="F:superoxide dismutase activity"/>
    <property type="evidence" value="ECO:0000314"/>
    <property type="project" value="UniProtKB"/>
</dbReference>
<dbReference type="GO" id="GO:0004842">
    <property type="term" value="F:ubiquitin-protein transferase activity"/>
    <property type="evidence" value="ECO:0000250"/>
    <property type="project" value="UniProtKB"/>
</dbReference>
<dbReference type="GO" id="GO:0008270">
    <property type="term" value="F:zinc ion binding"/>
    <property type="evidence" value="ECO:0000314"/>
    <property type="project" value="UniProtKB"/>
</dbReference>
<dbReference type="GO" id="GO:0060088">
    <property type="term" value="P:auditory receptor cell stereocilium organization"/>
    <property type="evidence" value="ECO:0000250"/>
    <property type="project" value="UniProtKB"/>
</dbReference>
<dbReference type="GO" id="GO:0007566">
    <property type="term" value="P:embryo implantation"/>
    <property type="evidence" value="ECO:0000250"/>
    <property type="project" value="UniProtKB"/>
</dbReference>
<dbReference type="GO" id="GO:0006749">
    <property type="term" value="P:glutathione metabolic process"/>
    <property type="evidence" value="ECO:0000250"/>
    <property type="project" value="UniProtKB"/>
</dbReference>
<dbReference type="GO" id="GO:0060047">
    <property type="term" value="P:heart contraction"/>
    <property type="evidence" value="ECO:0000250"/>
    <property type="project" value="UniProtKB"/>
</dbReference>
<dbReference type="GO" id="GO:0050665">
    <property type="term" value="P:hydrogen peroxide biosynthetic process"/>
    <property type="evidence" value="ECO:0000250"/>
    <property type="project" value="UniProtKB"/>
</dbReference>
<dbReference type="GO" id="GO:0006879">
    <property type="term" value="P:intracellular iron ion homeostasis"/>
    <property type="evidence" value="ECO:0000250"/>
    <property type="project" value="UniProtKB"/>
</dbReference>
<dbReference type="GO" id="GO:0007626">
    <property type="term" value="P:locomotory behavior"/>
    <property type="evidence" value="ECO:0000250"/>
    <property type="project" value="UniProtKB"/>
</dbReference>
<dbReference type="GO" id="GO:0046716">
    <property type="term" value="P:muscle cell cellular homeostasis"/>
    <property type="evidence" value="ECO:0000250"/>
    <property type="project" value="UniProtKB"/>
</dbReference>
<dbReference type="GO" id="GO:0002262">
    <property type="term" value="P:myeloid cell homeostasis"/>
    <property type="evidence" value="ECO:0000250"/>
    <property type="project" value="UniProtKB"/>
</dbReference>
<dbReference type="GO" id="GO:0043524">
    <property type="term" value="P:negative regulation of neuron apoptotic process"/>
    <property type="evidence" value="ECO:0000250"/>
    <property type="project" value="UniProtKB"/>
</dbReference>
<dbReference type="GO" id="GO:0060052">
    <property type="term" value="P:neurofilament cytoskeleton organization"/>
    <property type="evidence" value="ECO:0000250"/>
    <property type="project" value="UniProtKB"/>
</dbReference>
<dbReference type="GO" id="GO:0001541">
    <property type="term" value="P:ovarian follicle development"/>
    <property type="evidence" value="ECO:0000250"/>
    <property type="project" value="UniProtKB"/>
</dbReference>
<dbReference type="GO" id="GO:0032287">
    <property type="term" value="P:peripheral nervous system myelin maintenance"/>
    <property type="evidence" value="ECO:0000250"/>
    <property type="project" value="UniProtKB"/>
</dbReference>
<dbReference type="GO" id="GO:0043085">
    <property type="term" value="P:positive regulation of catalytic activity"/>
    <property type="evidence" value="ECO:0000314"/>
    <property type="project" value="UniProtKB"/>
</dbReference>
<dbReference type="GO" id="GO:0001819">
    <property type="term" value="P:positive regulation of cytokine production"/>
    <property type="evidence" value="ECO:0000250"/>
    <property type="project" value="UniProtKB"/>
</dbReference>
<dbReference type="GO" id="GO:0043410">
    <property type="term" value="P:positive regulation of MAPK cascade"/>
    <property type="evidence" value="ECO:0000250"/>
    <property type="project" value="UniProtKB"/>
</dbReference>
<dbReference type="GO" id="GO:0043161">
    <property type="term" value="P:proteasome-mediated ubiquitin-dependent protein catabolic process"/>
    <property type="evidence" value="ECO:0000250"/>
    <property type="project" value="UniProtKB"/>
</dbReference>
<dbReference type="GO" id="GO:0000209">
    <property type="term" value="P:protein polyubiquitination"/>
    <property type="evidence" value="ECO:0000250"/>
    <property type="project" value="UniProtKB"/>
</dbReference>
<dbReference type="GO" id="GO:0072593">
    <property type="term" value="P:reactive oxygen species metabolic process"/>
    <property type="evidence" value="ECO:0000250"/>
    <property type="project" value="UniProtKB"/>
</dbReference>
<dbReference type="GO" id="GO:0008217">
    <property type="term" value="P:regulation of blood pressure"/>
    <property type="evidence" value="ECO:0000250"/>
    <property type="project" value="UniProtKB"/>
</dbReference>
<dbReference type="GO" id="GO:0051881">
    <property type="term" value="P:regulation of mitochondrial membrane potential"/>
    <property type="evidence" value="ECO:0000250"/>
    <property type="project" value="UniProtKB"/>
</dbReference>
<dbReference type="GO" id="GO:0040014">
    <property type="term" value="P:regulation of multicellular organism growth"/>
    <property type="evidence" value="ECO:0000250"/>
    <property type="project" value="UniProtKB"/>
</dbReference>
<dbReference type="GO" id="GO:0060087">
    <property type="term" value="P:relaxation of vascular associated smooth muscle"/>
    <property type="evidence" value="ECO:0000250"/>
    <property type="project" value="UniProtKB"/>
</dbReference>
<dbReference type="GO" id="GO:0019430">
    <property type="term" value="P:removal of superoxide radicals"/>
    <property type="evidence" value="ECO:0000314"/>
    <property type="project" value="UniProtKB"/>
</dbReference>
<dbReference type="GO" id="GO:0048678">
    <property type="term" value="P:response to axon injury"/>
    <property type="evidence" value="ECO:0000250"/>
    <property type="project" value="UniProtKB"/>
</dbReference>
<dbReference type="GO" id="GO:0045471">
    <property type="term" value="P:response to ethanol"/>
    <property type="evidence" value="ECO:0000250"/>
    <property type="project" value="UniProtKB"/>
</dbReference>
<dbReference type="GO" id="GO:0009408">
    <property type="term" value="P:response to heat"/>
    <property type="evidence" value="ECO:0000250"/>
    <property type="project" value="UniProtKB"/>
</dbReference>
<dbReference type="GO" id="GO:0042542">
    <property type="term" value="P:response to hydrogen peroxide"/>
    <property type="evidence" value="ECO:0000250"/>
    <property type="project" value="UniProtKB"/>
</dbReference>
<dbReference type="GO" id="GO:0000303">
    <property type="term" value="P:response to superoxide"/>
    <property type="evidence" value="ECO:0000250"/>
    <property type="project" value="UniProtKB"/>
</dbReference>
<dbReference type="GO" id="GO:0001895">
    <property type="term" value="P:retina homeostasis"/>
    <property type="evidence" value="ECO:0000250"/>
    <property type="project" value="UniProtKB"/>
</dbReference>
<dbReference type="GO" id="GO:0007605">
    <property type="term" value="P:sensory perception of sound"/>
    <property type="evidence" value="ECO:0000250"/>
    <property type="project" value="UniProtKB"/>
</dbReference>
<dbReference type="GO" id="GO:0007283">
    <property type="term" value="P:spermatogenesis"/>
    <property type="evidence" value="ECO:0000250"/>
    <property type="project" value="UniProtKB"/>
</dbReference>
<dbReference type="GO" id="GO:0006801">
    <property type="term" value="P:superoxide metabolic process"/>
    <property type="evidence" value="ECO:0000250"/>
    <property type="project" value="UniProtKB"/>
</dbReference>
<dbReference type="GO" id="GO:0019226">
    <property type="term" value="P:transmission of nerve impulse"/>
    <property type="evidence" value="ECO:0000250"/>
    <property type="project" value="UniProtKB"/>
</dbReference>
<dbReference type="CDD" id="cd00305">
    <property type="entry name" value="Cu-Zn_Superoxide_Dismutase"/>
    <property type="match status" value="1"/>
</dbReference>
<dbReference type="FunFam" id="2.60.40.200:FF:000001">
    <property type="entry name" value="Superoxide dismutase [Cu-Zn]"/>
    <property type="match status" value="1"/>
</dbReference>
<dbReference type="Gene3D" id="2.60.40.200">
    <property type="entry name" value="Superoxide dismutase, copper/zinc binding domain"/>
    <property type="match status" value="1"/>
</dbReference>
<dbReference type="InterPro" id="IPR036423">
    <property type="entry name" value="SOD-like_Cu/Zn_dom_sf"/>
</dbReference>
<dbReference type="InterPro" id="IPR024134">
    <property type="entry name" value="SOD_Cu/Zn_/chaperone"/>
</dbReference>
<dbReference type="InterPro" id="IPR018152">
    <property type="entry name" value="SOD_Cu/Zn_BS"/>
</dbReference>
<dbReference type="InterPro" id="IPR001424">
    <property type="entry name" value="SOD_Cu_Zn_dom"/>
</dbReference>
<dbReference type="PANTHER" id="PTHR10003">
    <property type="entry name" value="SUPEROXIDE DISMUTASE CU-ZN -RELATED"/>
    <property type="match status" value="1"/>
</dbReference>
<dbReference type="Pfam" id="PF00080">
    <property type="entry name" value="Sod_Cu"/>
    <property type="match status" value="1"/>
</dbReference>
<dbReference type="PRINTS" id="PR00068">
    <property type="entry name" value="CUZNDISMTASE"/>
</dbReference>
<dbReference type="SUPFAM" id="SSF49329">
    <property type="entry name" value="Cu,Zn superoxide dismutase-like"/>
    <property type="match status" value="1"/>
</dbReference>
<dbReference type="PROSITE" id="PS00087">
    <property type="entry name" value="SOD_CU_ZN_1"/>
    <property type="match status" value="1"/>
</dbReference>
<dbReference type="PROSITE" id="PS00332">
    <property type="entry name" value="SOD_CU_ZN_2"/>
    <property type="match status" value="1"/>
</dbReference>
<accession>P00442</accession>
<accession>Q3ZCF4</accession>
<proteinExistence type="evidence at protein level"/>
<comment type="function">
    <text evidence="9">Destroys radicals which are normally produced within the cells and which are toxic to biological systems.</text>
</comment>
<comment type="catalytic activity">
    <reaction evidence="9">
        <text>2 superoxide + 2 H(+) = H2O2 + O2</text>
        <dbReference type="Rhea" id="RHEA:20696"/>
        <dbReference type="ChEBI" id="CHEBI:15378"/>
        <dbReference type="ChEBI" id="CHEBI:15379"/>
        <dbReference type="ChEBI" id="CHEBI:16240"/>
        <dbReference type="ChEBI" id="CHEBI:18421"/>
        <dbReference type="EC" id="1.15.1.1"/>
    </reaction>
</comment>
<comment type="cofactor">
    <cofactor>
        <name>Cu cation</name>
        <dbReference type="ChEBI" id="CHEBI:23378"/>
    </cofactor>
    <text>Binds 1 copper ion per subunit.</text>
</comment>
<comment type="cofactor">
    <cofactor>
        <name>Zn(2+)</name>
        <dbReference type="ChEBI" id="CHEBI:29105"/>
    </cofactor>
    <text>Binds 1 zinc ion per subunit.</text>
</comment>
<comment type="subunit">
    <text evidence="2 4">Homodimer; non-disulfide-linked (By similarity). Heterodimer with SOD1. The heterodimer CCS:SOD1 interacts with SLC31A1; this heterotrimer is Cu(1+)-mediated and its maintenance is regulated through SOD1 activation (By similarity).</text>
</comment>
<comment type="interaction">
    <interactant intactId="EBI-6654424">
        <id>P00442</id>
    </interactant>
    <interactant intactId="EBI-6654511">
        <id>P62998</id>
        <label>RAC1</label>
    </interactant>
    <organismsDiffer>false</organismsDiffer>
    <experiments>2</experiments>
</comment>
<comment type="subcellular location">
    <subcellularLocation>
        <location>Cytoplasm</location>
    </subcellularLocation>
    <subcellularLocation>
        <location evidence="1">Nucleus</location>
    </subcellularLocation>
</comment>
<comment type="PTM">
    <text evidence="1">Palmitoylation helps nuclear targeting and decreases catalytic activity.</text>
</comment>
<comment type="PTM">
    <text evidence="2">Succinylation, adjacent to copper catalytic site, probably inhibits activity. Desuccinylation by SIRT5 enhances activity.</text>
</comment>
<comment type="miscellaneous">
    <text evidence="9">Chemical modification of Arg-142 reduces activity by 80-90%.</text>
</comment>
<comment type="similarity">
    <text evidence="10">Belongs to the Cu-Zn superoxide dismutase family.</text>
</comment>